<gene>
    <name evidence="1" type="primary">rpoB</name>
    <name type="ordered locus">BamMC406_0268</name>
</gene>
<protein>
    <recommendedName>
        <fullName evidence="1">DNA-directed RNA polymerase subunit beta</fullName>
        <shortName evidence="1">RNAP subunit beta</shortName>
        <ecNumber evidence="1">2.7.7.6</ecNumber>
    </recommendedName>
    <alternativeName>
        <fullName evidence="1">RNA polymerase subunit beta</fullName>
    </alternativeName>
    <alternativeName>
        <fullName evidence="1">Transcriptase subunit beta</fullName>
    </alternativeName>
</protein>
<feature type="chain" id="PRO_1000141668" description="DNA-directed RNA polymerase subunit beta">
    <location>
        <begin position="1"/>
        <end position="1368"/>
    </location>
</feature>
<dbReference type="EC" id="2.7.7.6" evidence="1"/>
<dbReference type="EMBL" id="CP001025">
    <property type="protein sequence ID" value="ACB62769.1"/>
    <property type="molecule type" value="Genomic_DNA"/>
</dbReference>
<dbReference type="RefSeq" id="WP_012362891.1">
    <property type="nucleotide sequence ID" value="NC_010551.1"/>
</dbReference>
<dbReference type="SMR" id="B1YRC2"/>
<dbReference type="KEGG" id="bac:BamMC406_0268"/>
<dbReference type="HOGENOM" id="CLU_000524_4_0_4"/>
<dbReference type="OrthoDB" id="9803954at2"/>
<dbReference type="Proteomes" id="UP000001680">
    <property type="component" value="Chromosome 1"/>
</dbReference>
<dbReference type="GO" id="GO:0000428">
    <property type="term" value="C:DNA-directed RNA polymerase complex"/>
    <property type="evidence" value="ECO:0007669"/>
    <property type="project" value="UniProtKB-KW"/>
</dbReference>
<dbReference type="GO" id="GO:0003677">
    <property type="term" value="F:DNA binding"/>
    <property type="evidence" value="ECO:0007669"/>
    <property type="project" value="UniProtKB-UniRule"/>
</dbReference>
<dbReference type="GO" id="GO:0003899">
    <property type="term" value="F:DNA-directed RNA polymerase activity"/>
    <property type="evidence" value="ECO:0007669"/>
    <property type="project" value="UniProtKB-UniRule"/>
</dbReference>
<dbReference type="GO" id="GO:0032549">
    <property type="term" value="F:ribonucleoside binding"/>
    <property type="evidence" value="ECO:0007669"/>
    <property type="project" value="InterPro"/>
</dbReference>
<dbReference type="GO" id="GO:0006351">
    <property type="term" value="P:DNA-templated transcription"/>
    <property type="evidence" value="ECO:0007669"/>
    <property type="project" value="UniProtKB-UniRule"/>
</dbReference>
<dbReference type="CDD" id="cd00653">
    <property type="entry name" value="RNA_pol_B_RPB2"/>
    <property type="match status" value="1"/>
</dbReference>
<dbReference type="FunFam" id="2.40.50.100:FF:000006">
    <property type="entry name" value="DNA-directed RNA polymerase subunit beta"/>
    <property type="match status" value="1"/>
</dbReference>
<dbReference type="FunFam" id="2.40.50.150:FF:000001">
    <property type="entry name" value="DNA-directed RNA polymerase subunit beta"/>
    <property type="match status" value="1"/>
</dbReference>
<dbReference type="FunFam" id="3.90.1800.10:FF:000001">
    <property type="entry name" value="DNA-directed RNA polymerase subunit beta"/>
    <property type="match status" value="1"/>
</dbReference>
<dbReference type="Gene3D" id="2.40.50.100">
    <property type="match status" value="1"/>
</dbReference>
<dbReference type="Gene3D" id="2.40.50.150">
    <property type="match status" value="1"/>
</dbReference>
<dbReference type="Gene3D" id="3.90.1100.10">
    <property type="match status" value="2"/>
</dbReference>
<dbReference type="Gene3D" id="2.30.150.10">
    <property type="entry name" value="DNA-directed RNA polymerase, beta subunit, external 1 domain"/>
    <property type="match status" value="1"/>
</dbReference>
<dbReference type="Gene3D" id="2.40.270.10">
    <property type="entry name" value="DNA-directed RNA polymerase, subunit 2, domain 6"/>
    <property type="match status" value="1"/>
</dbReference>
<dbReference type="Gene3D" id="3.90.1800.10">
    <property type="entry name" value="RNA polymerase alpha subunit dimerisation domain"/>
    <property type="match status" value="1"/>
</dbReference>
<dbReference type="Gene3D" id="3.90.1110.10">
    <property type="entry name" value="RNA polymerase Rpb2, domain 2"/>
    <property type="match status" value="1"/>
</dbReference>
<dbReference type="HAMAP" id="MF_01321">
    <property type="entry name" value="RNApol_bact_RpoB"/>
    <property type="match status" value="1"/>
</dbReference>
<dbReference type="InterPro" id="IPR042107">
    <property type="entry name" value="DNA-dir_RNA_pol_bsu_ext_1_sf"/>
</dbReference>
<dbReference type="InterPro" id="IPR019462">
    <property type="entry name" value="DNA-dir_RNA_pol_bsu_external_1"/>
</dbReference>
<dbReference type="InterPro" id="IPR015712">
    <property type="entry name" value="DNA-dir_RNA_pol_su2"/>
</dbReference>
<dbReference type="InterPro" id="IPR007120">
    <property type="entry name" value="DNA-dir_RNAP_su2_dom"/>
</dbReference>
<dbReference type="InterPro" id="IPR037033">
    <property type="entry name" value="DNA-dir_RNAP_su2_hyb_sf"/>
</dbReference>
<dbReference type="InterPro" id="IPR010243">
    <property type="entry name" value="RNA_pol_bsu_bac"/>
</dbReference>
<dbReference type="InterPro" id="IPR007121">
    <property type="entry name" value="RNA_pol_bsu_CS"/>
</dbReference>
<dbReference type="InterPro" id="IPR007644">
    <property type="entry name" value="RNA_pol_bsu_protrusion"/>
</dbReference>
<dbReference type="InterPro" id="IPR007642">
    <property type="entry name" value="RNA_pol_Rpb2_2"/>
</dbReference>
<dbReference type="InterPro" id="IPR037034">
    <property type="entry name" value="RNA_pol_Rpb2_2_sf"/>
</dbReference>
<dbReference type="InterPro" id="IPR007645">
    <property type="entry name" value="RNA_pol_Rpb2_3"/>
</dbReference>
<dbReference type="InterPro" id="IPR007641">
    <property type="entry name" value="RNA_pol_Rpb2_7"/>
</dbReference>
<dbReference type="InterPro" id="IPR014724">
    <property type="entry name" value="RNA_pol_RPB2_OB-fold"/>
</dbReference>
<dbReference type="NCBIfam" id="NF001616">
    <property type="entry name" value="PRK00405.1"/>
    <property type="match status" value="1"/>
</dbReference>
<dbReference type="NCBIfam" id="TIGR02013">
    <property type="entry name" value="rpoB"/>
    <property type="match status" value="1"/>
</dbReference>
<dbReference type="PANTHER" id="PTHR20856">
    <property type="entry name" value="DNA-DIRECTED RNA POLYMERASE I SUBUNIT 2"/>
    <property type="match status" value="1"/>
</dbReference>
<dbReference type="Pfam" id="PF04563">
    <property type="entry name" value="RNA_pol_Rpb2_1"/>
    <property type="match status" value="1"/>
</dbReference>
<dbReference type="Pfam" id="PF04561">
    <property type="entry name" value="RNA_pol_Rpb2_2"/>
    <property type="match status" value="2"/>
</dbReference>
<dbReference type="Pfam" id="PF04565">
    <property type="entry name" value="RNA_pol_Rpb2_3"/>
    <property type="match status" value="1"/>
</dbReference>
<dbReference type="Pfam" id="PF10385">
    <property type="entry name" value="RNA_pol_Rpb2_45"/>
    <property type="match status" value="1"/>
</dbReference>
<dbReference type="Pfam" id="PF00562">
    <property type="entry name" value="RNA_pol_Rpb2_6"/>
    <property type="match status" value="1"/>
</dbReference>
<dbReference type="Pfam" id="PF04560">
    <property type="entry name" value="RNA_pol_Rpb2_7"/>
    <property type="match status" value="1"/>
</dbReference>
<dbReference type="SUPFAM" id="SSF64484">
    <property type="entry name" value="beta and beta-prime subunits of DNA dependent RNA-polymerase"/>
    <property type="match status" value="1"/>
</dbReference>
<dbReference type="PROSITE" id="PS01166">
    <property type="entry name" value="RNA_POL_BETA"/>
    <property type="match status" value="1"/>
</dbReference>
<reference key="1">
    <citation type="submission" date="2008-04" db="EMBL/GenBank/DDBJ databases">
        <title>Complete sequence of chromosome 1 of Burkholderia ambifaria MC40-6.</title>
        <authorList>
            <person name="Copeland A."/>
            <person name="Lucas S."/>
            <person name="Lapidus A."/>
            <person name="Glavina del Rio T."/>
            <person name="Dalin E."/>
            <person name="Tice H."/>
            <person name="Pitluck S."/>
            <person name="Chain P."/>
            <person name="Malfatti S."/>
            <person name="Shin M."/>
            <person name="Vergez L."/>
            <person name="Lang D."/>
            <person name="Schmutz J."/>
            <person name="Larimer F."/>
            <person name="Land M."/>
            <person name="Hauser L."/>
            <person name="Kyrpides N."/>
            <person name="Lykidis A."/>
            <person name="Ramette A."/>
            <person name="Konstantinidis K."/>
            <person name="Tiedje J."/>
            <person name="Richardson P."/>
        </authorList>
    </citation>
    <scope>NUCLEOTIDE SEQUENCE [LARGE SCALE GENOMIC DNA]</scope>
    <source>
        <strain>MC40-6</strain>
    </source>
</reference>
<accession>B1YRC2</accession>
<name>RPOB_BURA4</name>
<proteinExistence type="inferred from homology"/>
<sequence length="1368" mass="153255">MQYSFTEKKRIRKSFAKRPIVHQVPFLLATQLESFSTFLQADVPGTQRKPEGLQAAFTSVFPIVSHNGFARLEFVSYALSSPAFNIKECQQRGLTYCSALRAKVRLVILDKESPNKPVVKEVKEQEVYMGEIPLMTPTGSFVINGTERVIVSQLHRSPGVFFEHDKGKTHSSGKLLFSARIIPYRGSWLDFEFDPKDILYFRVDRRRKMPVTILLKAIGLTPEQILANFFVFDNFTLMDEGAQLEFVPERLRGEVARFDITDRDGKVIVQKDKRINAKHIRDLEAAKTKFISVPEDYLLGRVLAKNVVDGDTGEVIASANDEVTESVLEKLREAGIKEIQTLYTNDLDQGPYISSTLRVDETTDKTAARIAIYRMMRPGEPPTEEAVEALFNRLFYSEEAYDLSKVGRMKFNRRVGRDEITGPMTLQDDDILATIKILVELRNGKGEVDDIDHLGNRRVRCVGELAENQFRAGLVRVERAVKERLGQAESENLMPHDLINSKPISSAIREFFGSSQLSQFMDQTNPLSEITHKRRVSALGPGGLTRERAGFEVRDVHPTHYGRVCPIETPEGPNIGLINSLALYAHLNEYGFLETPYRKVVDSKVTDQIDYLSAIEEGRYMIAQANAAIDENGQLVDELVSSREAGETMMVTPDRIQYMDVAPSQIVSVAASLIPFLEHDDANRALMGSNMQRQAVPCLRPEKPVVGTGIERTCAVDSGTTVQAFRGGVVDYVDAGRIVIRVNDDEAVAGEVGVDIYNLIKYTRSNQNTNINQRPIVKMGDKVSRGDVLADGASTDLGELALGQNMLIAFMPWNGYNFEDSILISEKVVADDRYTSIHIEELNVVARDTKLGPEEITRDISNLAEVQLGRLDESGIVYIGAEVEAGDVLVGKVTPKGETQLTPEEKLLRAIFGEKASDVKDTSLRVPSGMSGTVIDVQVFTREGIQRDKRAQQIIDDELKRYRLDLNDQLRIVEGDAFQRLARMLVGKVANGGPKKLAKGTKIDQAYLEDLDHYHWFDIRLADDEAAAQLEAIKNSIEEKRHQFDLAFEEKRKKLTQGDELPPGVLKMVKVYLAVKRRLQPGDKMAGRHGNKGVVSKIVPIEDMPYMADGRPADVVLNPLGVPSRMNVGQVLEVHLGWAAKGLGWRIGEMLQRQAKIEEMRAFLTKIYNDSGRKEDLESFTDDEILELAKNLREGVPFATPVFDGATEEEMGKMLDLAFPDDIAEQLGMNPSKNQVRLYDGRTGEMFERRVTLGYMHYLKLHHLVDDKMHARSTGPYSLVTQQPLGGKAQFGGQRFGEMEVWALEAYGASYVLQEMLTVKSDDVNGRTKVYENLVKGDHVIDAGMPESFNVLVKEIRSLGIDIDLDRN</sequence>
<comment type="function">
    <text evidence="1">DNA-dependent RNA polymerase catalyzes the transcription of DNA into RNA using the four ribonucleoside triphosphates as substrates.</text>
</comment>
<comment type="catalytic activity">
    <reaction evidence="1">
        <text>RNA(n) + a ribonucleoside 5'-triphosphate = RNA(n+1) + diphosphate</text>
        <dbReference type="Rhea" id="RHEA:21248"/>
        <dbReference type="Rhea" id="RHEA-COMP:14527"/>
        <dbReference type="Rhea" id="RHEA-COMP:17342"/>
        <dbReference type="ChEBI" id="CHEBI:33019"/>
        <dbReference type="ChEBI" id="CHEBI:61557"/>
        <dbReference type="ChEBI" id="CHEBI:140395"/>
        <dbReference type="EC" id="2.7.7.6"/>
    </reaction>
</comment>
<comment type="subunit">
    <text evidence="1">The RNAP catalytic core consists of 2 alpha, 1 beta, 1 beta' and 1 omega subunit. When a sigma factor is associated with the core the holoenzyme is formed, which can initiate transcription.</text>
</comment>
<comment type="similarity">
    <text evidence="1">Belongs to the RNA polymerase beta chain family.</text>
</comment>
<keyword id="KW-0240">DNA-directed RNA polymerase</keyword>
<keyword id="KW-0548">Nucleotidyltransferase</keyword>
<keyword id="KW-0804">Transcription</keyword>
<keyword id="KW-0808">Transferase</keyword>
<evidence type="ECO:0000255" key="1">
    <source>
        <dbReference type="HAMAP-Rule" id="MF_01321"/>
    </source>
</evidence>
<organism>
    <name type="scientific">Burkholderia ambifaria (strain MC40-6)</name>
    <dbReference type="NCBI Taxonomy" id="398577"/>
    <lineage>
        <taxon>Bacteria</taxon>
        <taxon>Pseudomonadati</taxon>
        <taxon>Pseudomonadota</taxon>
        <taxon>Betaproteobacteria</taxon>
        <taxon>Burkholderiales</taxon>
        <taxon>Burkholderiaceae</taxon>
        <taxon>Burkholderia</taxon>
        <taxon>Burkholderia cepacia complex</taxon>
    </lineage>
</organism>